<reference key="1">
    <citation type="journal article" date="1992" name="Mol. Gen. Genet.">
        <title>RNA12+, a gene of Saccharomyces cerevisiae involved in pre-rRNA maturation. Characterization of a temperature-sensitive mutant, cloning and sequencing of the gene.</title>
        <authorList>
            <person name="Liang S."/>
            <person name="Alksne L."/>
            <person name="Warner J.R."/>
            <person name="Lacroute F."/>
        </authorList>
    </citation>
    <scope>NUCLEOTIDE SEQUENCE [GENOMIC DNA]</scope>
    <scope>MUTAGENESIS OF ASN-502</scope>
    <source>
        <strain>ATCC 28383 / FL100 / VTT C-80102</strain>
    </source>
</reference>
<reference key="2">
    <citation type="journal article" date="1997" name="Nature">
        <title>The nucleotide sequence of Saccharomyces cerevisiae chromosome XIII.</title>
        <authorList>
            <person name="Bowman S."/>
            <person name="Churcher C.M."/>
            <person name="Badcock K."/>
            <person name="Brown D."/>
            <person name="Chillingworth T."/>
            <person name="Connor R."/>
            <person name="Dedman K."/>
            <person name="Devlin K."/>
            <person name="Gentles S."/>
            <person name="Hamlin N."/>
            <person name="Hunt S."/>
            <person name="Jagels K."/>
            <person name="Lye G."/>
            <person name="Moule S."/>
            <person name="Odell C."/>
            <person name="Pearson D."/>
            <person name="Rajandream M.A."/>
            <person name="Rice P."/>
            <person name="Skelton J."/>
            <person name="Walsh S.V."/>
            <person name="Whitehead S."/>
            <person name="Barrell B.G."/>
        </authorList>
    </citation>
    <scope>NUCLEOTIDE SEQUENCE [LARGE SCALE GENOMIC DNA]</scope>
    <source>
        <strain>ATCC 204508 / S288c</strain>
    </source>
</reference>
<reference key="3">
    <citation type="journal article" date="2014" name="G3 (Bethesda)">
        <title>The reference genome sequence of Saccharomyces cerevisiae: Then and now.</title>
        <authorList>
            <person name="Engel S.R."/>
            <person name="Dietrich F.S."/>
            <person name="Fisk D.G."/>
            <person name="Binkley G."/>
            <person name="Balakrishnan R."/>
            <person name="Costanzo M.C."/>
            <person name="Dwight S.S."/>
            <person name="Hitz B.C."/>
            <person name="Karra K."/>
            <person name="Nash R.S."/>
            <person name="Weng S."/>
            <person name="Wong E.D."/>
            <person name="Lloyd P."/>
            <person name="Skrzypek M.S."/>
            <person name="Miyasato S.R."/>
            <person name="Simison M."/>
            <person name="Cherry J.M."/>
        </authorList>
    </citation>
    <scope>GENOME REANNOTATION</scope>
    <source>
        <strain>ATCC 204508 / S288c</strain>
    </source>
</reference>
<reference key="4">
    <citation type="journal article" date="1993" name="Genetics">
        <title>Nuclear mutations in Saccharomyces cerevisiae that affect the escape of DNA from mitochondria to the nucleus.</title>
        <authorList>
            <person name="Thorsness P.E."/>
            <person name="Fox T.D."/>
        </authorList>
    </citation>
    <scope>FUNCTION</scope>
</reference>
<reference key="5">
    <citation type="journal article" date="1996" name="Mol. Cell. Biol.">
        <title>Inactivation of YME2/RNA12, which encodes an integral inner mitochondrial membrane protein, causes increased escape of DNA from mitochondria to the nucleus in Saccharomyces cerevisiae.</title>
        <authorList>
            <person name="Hanekamp T."/>
            <person name="Thorsness P.E."/>
        </authorList>
    </citation>
    <scope>FUNCTION</scope>
    <scope>SUBCELLULAR LOCATION</scope>
    <scope>TOPOLOGY</scope>
    <scope>MUTAGENESIS OF ASN-502</scope>
</reference>
<reference key="6">
    <citation type="journal article" date="1999" name="Curr. Genet.">
        <title>YNT20, a bypass suppressor of yme1 yme2, encodes a putative 3'-5' exonuclease localized in mitochondria of Saccharomyces cerevisiae.</title>
        <authorList>
            <person name="Hanekamp T."/>
            <person name="Thorsness P.E."/>
        </authorList>
    </citation>
    <scope>FUNCTION</scope>
</reference>
<reference key="7">
    <citation type="journal article" date="2001" name="Mol. Microbiol.">
        <title>The ZbYME2 gene from the food spoilage yeast Zygosaccharomyces bailii confers not only YME2 functions in Saccharomyces cerevisiae, but also the capacity for catabolism of sorbate and benzoate, two major weak organic acid preservatives.</title>
        <authorList>
            <person name="Mollapour M."/>
            <person name="Piper P.W."/>
        </authorList>
    </citation>
    <scope>FUNCTION</scope>
</reference>
<reference key="8">
    <citation type="journal article" date="2003" name="Nature">
        <title>Global analysis of protein localization in budding yeast.</title>
        <authorList>
            <person name="Huh W.-K."/>
            <person name="Falvo J.V."/>
            <person name="Gerke L.C."/>
            <person name="Carroll A.S."/>
            <person name="Howson R.W."/>
            <person name="Weissman J.S."/>
            <person name="O'Shea E.K."/>
        </authorList>
    </citation>
    <scope>SUBCELLULAR LOCATION [LARGE SCALE ANALYSIS]</scope>
</reference>
<reference key="9">
    <citation type="journal article" date="2003" name="Nature">
        <title>Global analysis of protein expression in yeast.</title>
        <authorList>
            <person name="Ghaemmaghami S."/>
            <person name="Huh W.-K."/>
            <person name="Bower K."/>
            <person name="Howson R.W."/>
            <person name="Belle A."/>
            <person name="Dephoure N."/>
            <person name="O'Shea E.K."/>
            <person name="Weissman J.S."/>
        </authorList>
    </citation>
    <scope>LEVEL OF PROTEIN EXPRESSION [LARGE SCALE ANALYSIS]</scope>
</reference>
<reference key="10">
    <citation type="journal article" date="2003" name="Proc. Natl. Acad. Sci. U.S.A.">
        <title>The proteome of Saccharomyces cerevisiae mitochondria.</title>
        <authorList>
            <person name="Sickmann A."/>
            <person name="Reinders J."/>
            <person name="Wagner Y."/>
            <person name="Joppich C."/>
            <person name="Zahedi R.P."/>
            <person name="Meyer H.E."/>
            <person name="Schoenfisch B."/>
            <person name="Perschil I."/>
            <person name="Chacinska A."/>
            <person name="Guiard B."/>
            <person name="Rehling P."/>
            <person name="Pfanner N."/>
            <person name="Meisinger C."/>
        </authorList>
    </citation>
    <scope>SUBCELLULAR LOCATION [LARGE SCALE ANALYSIS]</scope>
    <source>
        <strain>ATCC 76625 / YPH499</strain>
    </source>
</reference>
<reference key="11">
    <citation type="journal article" date="2006" name="Curr. Genet.">
        <title>Yme2p is a mediator of nucleoid structure and number in mitochondria of the yeast Saccharomyces cerevisiae.</title>
        <authorList>
            <person name="Park S."/>
            <person name="Hanekamp T."/>
            <person name="Thorsness M.K."/>
            <person name="Thorsness P.E."/>
        </authorList>
    </citation>
    <scope>FUNCTION</scope>
    <scope>MUTAGENESIS OF ASN-502</scope>
</reference>
<evidence type="ECO:0000255" key="1"/>
<evidence type="ECO:0000256" key="2">
    <source>
        <dbReference type="SAM" id="MobiDB-lite"/>
    </source>
</evidence>
<evidence type="ECO:0000269" key="3">
    <source>
    </source>
</evidence>
<evidence type="ECO:0000269" key="4">
    <source>
    </source>
</evidence>
<evidence type="ECO:0000269" key="5">
    <source>
    </source>
</evidence>
<evidence type="ECO:0000269" key="6">
    <source>
    </source>
</evidence>
<evidence type="ECO:0000269" key="7">
    <source>
    </source>
</evidence>
<evidence type="ECO:0000269" key="8">
    <source>
    </source>
</evidence>
<evidence type="ECO:0000269" key="9">
    <source>
    </source>
</evidence>
<evidence type="ECO:0000269" key="10">
    <source>
    </source>
</evidence>
<evidence type="ECO:0000269" key="11">
    <source>
    </source>
</evidence>
<evidence type="ECO:0000305" key="12"/>
<dbReference type="EMBL" id="S92205">
    <property type="protein sequence ID" value="AAB21991.1"/>
    <property type="molecule type" value="Genomic_DNA"/>
</dbReference>
<dbReference type="EMBL" id="Z49212">
    <property type="protein sequence ID" value="CAA89135.1"/>
    <property type="molecule type" value="Genomic_DNA"/>
</dbReference>
<dbReference type="EMBL" id="BK006946">
    <property type="protein sequence ID" value="DAA10203.1"/>
    <property type="molecule type" value="Genomic_DNA"/>
</dbReference>
<dbReference type="PIR" id="S20462">
    <property type="entry name" value="S20462"/>
</dbReference>
<dbReference type="RefSeq" id="NP_014031.1">
    <property type="nucleotide sequence ID" value="NM_001182811.1"/>
</dbReference>
<dbReference type="BioGRID" id="35482">
    <property type="interactions" value="148"/>
</dbReference>
<dbReference type="DIP" id="DIP-678N"/>
<dbReference type="FunCoup" id="P32843">
    <property type="interactions" value="196"/>
</dbReference>
<dbReference type="IntAct" id="P32843">
    <property type="interactions" value="38"/>
</dbReference>
<dbReference type="STRING" id="4932.YMR302C"/>
<dbReference type="iPTMnet" id="P32843"/>
<dbReference type="PaxDb" id="4932-YMR302C"/>
<dbReference type="PeptideAtlas" id="P32843"/>
<dbReference type="EnsemblFungi" id="YMR302C_mRNA">
    <property type="protein sequence ID" value="YMR302C"/>
    <property type="gene ID" value="YMR302C"/>
</dbReference>
<dbReference type="GeneID" id="855348"/>
<dbReference type="KEGG" id="sce:YMR302C"/>
<dbReference type="AGR" id="SGD:S000004917"/>
<dbReference type="SGD" id="S000004917">
    <property type="gene designation" value="YME2"/>
</dbReference>
<dbReference type="VEuPathDB" id="FungiDB:YMR302C"/>
<dbReference type="eggNOG" id="ENOG502QS0P">
    <property type="taxonomic scope" value="Eukaryota"/>
</dbReference>
<dbReference type="HOGENOM" id="CLU_007861_1_0_1"/>
<dbReference type="InParanoid" id="P32843"/>
<dbReference type="OMA" id="FQFFRPY"/>
<dbReference type="OrthoDB" id="10267654at2759"/>
<dbReference type="BioCyc" id="YEAST:G3O-32968-MONOMER"/>
<dbReference type="BioGRID-ORCS" id="855348">
    <property type="hits" value="0 hits in 10 CRISPR screens"/>
</dbReference>
<dbReference type="PRO" id="PR:P32843"/>
<dbReference type="Proteomes" id="UP000002311">
    <property type="component" value="Chromosome XIII"/>
</dbReference>
<dbReference type="RNAct" id="P32843">
    <property type="molecule type" value="protein"/>
</dbReference>
<dbReference type="GO" id="GO:0005743">
    <property type="term" value="C:mitochondrial inner membrane"/>
    <property type="evidence" value="ECO:0000314"/>
    <property type="project" value="SGD"/>
</dbReference>
<dbReference type="GO" id="GO:0005739">
    <property type="term" value="C:mitochondrion"/>
    <property type="evidence" value="ECO:0007005"/>
    <property type="project" value="SGD"/>
</dbReference>
<dbReference type="GO" id="GO:0003723">
    <property type="term" value="F:RNA binding"/>
    <property type="evidence" value="ECO:0007669"/>
    <property type="project" value="UniProtKB-KW"/>
</dbReference>
<dbReference type="GO" id="GO:0000002">
    <property type="term" value="P:mitochondrial genome maintenance"/>
    <property type="evidence" value="ECO:0000315"/>
    <property type="project" value="SGD"/>
</dbReference>
<dbReference type="GO" id="GO:0006397">
    <property type="term" value="P:mRNA processing"/>
    <property type="evidence" value="ECO:0007669"/>
    <property type="project" value="UniProtKB-KW"/>
</dbReference>
<dbReference type="CDD" id="cd12433">
    <property type="entry name" value="RRM_Yme2p_like"/>
    <property type="match status" value="1"/>
</dbReference>
<dbReference type="FunFam" id="3.30.70.330:FF:000786">
    <property type="entry name" value="Yme2p"/>
    <property type="match status" value="1"/>
</dbReference>
<dbReference type="Gene3D" id="3.30.70.330">
    <property type="match status" value="1"/>
</dbReference>
<dbReference type="InterPro" id="IPR018850">
    <property type="entry name" value="Mt_escape_2_C"/>
</dbReference>
<dbReference type="InterPro" id="IPR012677">
    <property type="entry name" value="Nucleotide-bd_a/b_plait_sf"/>
</dbReference>
<dbReference type="InterPro" id="IPR035979">
    <property type="entry name" value="RBD_domain_sf"/>
</dbReference>
<dbReference type="InterPro" id="IPR000504">
    <property type="entry name" value="RRM_dom"/>
</dbReference>
<dbReference type="InterPro" id="IPR039627">
    <property type="entry name" value="Yme2_C"/>
</dbReference>
<dbReference type="InterPro" id="IPR034260">
    <property type="entry name" value="Yme2_RRM"/>
</dbReference>
<dbReference type="PANTHER" id="PTHR32198">
    <property type="entry name" value="MITOCHONDRIAL ESCAPE PROTEIN 2"/>
    <property type="match status" value="1"/>
</dbReference>
<dbReference type="PANTHER" id="PTHR32198:SF2">
    <property type="entry name" value="MITOCHONDRIAL ESCAPE PROTEIN 2"/>
    <property type="match status" value="1"/>
</dbReference>
<dbReference type="Pfam" id="PF10443">
    <property type="entry name" value="RNA12"/>
    <property type="match status" value="1"/>
</dbReference>
<dbReference type="Pfam" id="PF00076">
    <property type="entry name" value="RRM_1"/>
    <property type="match status" value="1"/>
</dbReference>
<dbReference type="SMART" id="SM00360">
    <property type="entry name" value="RRM"/>
    <property type="match status" value="1"/>
</dbReference>
<dbReference type="SUPFAM" id="SSF54928">
    <property type="entry name" value="RNA-binding domain, RBD"/>
    <property type="match status" value="1"/>
</dbReference>
<sequence length="850" mass="96689">MLLVRTTSLNVSRMPVPCLARGIGILKGKYRLANLMNAQPSVRHVSSEIQQKDQQAGESNTATDTGVIHKSDEETLIYFDNVYARTTSVWNPTLWYNLLLRNQSRDAVREKIRNLASPPNNPIYGLELKSTIPVKRDGGVFATFVVPPKYTKAQVNSLIQQNTARESSKNLLSYFTRASAFPVKGSPWIEDLRRLPSTTIVIKFQGPALTEEEIYSLFRRYGTIIDIFPPTAANNNVAKVRYRSFRGAISAKNCVSGIEIHNTVLHIQYENIRRGHLVSNFFTNHTRIAIPVLFALLSIFAVLVFDPIREFSIEQKITHKYSLSWDNKFWKQLKTLTSSTMTSIKYYWGGPDDNHQRKHLWEERIEKVNDLKMWLEENNNTFVVIRGPRGSGKHDLVMQHTLQNRANVLYLDCDKLIKSRTDPMFLKNAASQLGYFPIFPWIDSVTGVLDLTVQGLTGQKTGLSETKESRFRNMLTTSLMSIRRIALKNYKAFVSTGDGTVNVKEEDYLQQHPEAKPVIVIDRFEGKSEINGFVYKELSDWAAMLVQMNIAHVIFLTETVASNQRLSESLPNQVFKNLILSDASKENSRNYVLSQLEDYLYYNKKSKGENVKEPESEKETAENNDSDSEADTSVKKAEVILNEKELQEIDASLEPLGGRMLDLQAFVRRVKSGEEPSEAVDKMIEQASEQITQMFLSDKIDSNKSAQAWELIELLSANPVIPFHEIVNKPLFKAAPETGIMELENNGLITVSRDRGVLQEIRPAKPLYRAAFTYLINDPELAKVLKTRYLLKVVGFETGRIKKWEEELKPLGKVPDQKLFKTRLDYLSGKINASNAVITKCEEEIKNLSK</sequence>
<name>YME2_YEAST</name>
<feature type="transit peptide" description="Mitochondrion" evidence="1">
    <location>
        <begin position="1"/>
        <end position="44"/>
    </location>
</feature>
<feature type="chain" id="PRO_0000081806" description="Mitochondrial escape protein 2">
    <location>
        <begin position="45"/>
        <end position="850"/>
    </location>
</feature>
<feature type="topological domain" description="Mitochondrial matrix" evidence="1">
    <location>
        <begin position="45"/>
        <end position="287"/>
    </location>
</feature>
<feature type="transmembrane region" description="Helical" evidence="1">
    <location>
        <begin position="288"/>
        <end position="308"/>
    </location>
</feature>
<feature type="topological domain" description="Mitochondrial intermembrane" evidence="1">
    <location>
        <begin position="309"/>
        <end position="850"/>
    </location>
</feature>
<feature type="domain" description="RRM">
    <location>
        <begin position="198"/>
        <end position="272"/>
    </location>
</feature>
<feature type="region of interest" description="Disordered" evidence="2">
    <location>
        <begin position="44"/>
        <end position="66"/>
    </location>
</feature>
<feature type="region of interest" description="Disordered" evidence="2">
    <location>
        <begin position="607"/>
        <end position="633"/>
    </location>
</feature>
<feature type="compositionally biased region" description="Polar residues" evidence="2">
    <location>
        <begin position="47"/>
        <end position="64"/>
    </location>
</feature>
<feature type="compositionally biased region" description="Basic and acidic residues" evidence="2">
    <location>
        <begin position="607"/>
        <end position="621"/>
    </location>
</feature>
<feature type="mutagenesis site" description="In YME2-4; prevents mtDNA escape, growth on nonfermentable carbon sources and growth at 37 degrees Celsius on glucose." evidence="7 8 10">
    <original>N</original>
    <variation>Y</variation>
    <location>
        <position position="502"/>
    </location>
</feature>
<accession>P32843</accession>
<accession>D6W0C9</accession>
<keyword id="KW-0472">Membrane</keyword>
<keyword id="KW-0496">Mitochondrion</keyword>
<keyword id="KW-0999">Mitochondrion inner membrane</keyword>
<keyword id="KW-0507">mRNA processing</keyword>
<keyword id="KW-1185">Reference proteome</keyword>
<keyword id="KW-0694">RNA-binding</keyword>
<keyword id="KW-0809">Transit peptide</keyword>
<keyword id="KW-0812">Transmembrane</keyword>
<keyword id="KW-1133">Transmembrane helix</keyword>
<protein>
    <recommendedName>
        <fullName>Mitochondrial escape protein 2</fullName>
    </recommendedName>
    <alternativeName>
        <fullName>Protein RNA12</fullName>
    </alternativeName>
</protein>
<gene>
    <name type="primary">YME2</name>
    <name type="synonym">PRP12</name>
    <name type="synonym">RNA12</name>
    <name type="ordered locus">YMR302C</name>
    <name type="ORF">YM9952.04C</name>
</gene>
<organism>
    <name type="scientific">Saccharomyces cerevisiae (strain ATCC 204508 / S288c)</name>
    <name type="common">Baker's yeast</name>
    <dbReference type="NCBI Taxonomy" id="559292"/>
    <lineage>
        <taxon>Eukaryota</taxon>
        <taxon>Fungi</taxon>
        <taxon>Dikarya</taxon>
        <taxon>Ascomycota</taxon>
        <taxon>Saccharomycotina</taxon>
        <taxon>Saccharomycetes</taxon>
        <taxon>Saccharomycetales</taxon>
        <taxon>Saccharomycetaceae</taxon>
        <taxon>Saccharomyces</taxon>
    </lineage>
</organism>
<proteinExistence type="evidence at protein level"/>
<comment type="function">
    <text evidence="3 8 9 10 11">Plays a role in maintaining the mitochondrial genome and in controlling the mtDNA escape. Involved in the regulation of mtDNA nucleotide structure and number. May have a dispensable role in early maturation of pre-rRNA.</text>
</comment>
<comment type="subcellular location">
    <subcellularLocation>
        <location evidence="4 6 10">Mitochondrion inner membrane</location>
        <topology evidence="4 6 10">Single-pass membrane protein</topology>
    </subcellularLocation>
</comment>
<comment type="miscellaneous">
    <text evidence="5">Present with 5260 molecules/cell in log phase SD medium.</text>
</comment>
<comment type="similarity">
    <text evidence="12">Belongs to the YME2 family.</text>
</comment>